<feature type="chain" id="PRO_0000071164" description="Uncharacterized 19.0 kDa protein in cobS 5'region">
    <location>
        <begin position="1"/>
        <end position="171"/>
    </location>
</feature>
<feature type="domain" description="J" evidence="1">
    <location>
        <begin position="113"/>
        <end position="170"/>
    </location>
</feature>
<feature type="region of interest" description="Disordered" evidence="2">
    <location>
        <begin position="56"/>
        <end position="83"/>
    </location>
</feature>
<feature type="compositionally biased region" description="Polar residues" evidence="2">
    <location>
        <begin position="57"/>
        <end position="77"/>
    </location>
</feature>
<dbReference type="EMBL" id="M62869">
    <property type="protein sequence ID" value="AAA25791.1"/>
    <property type="molecule type" value="Genomic_DNA"/>
</dbReference>
<dbReference type="SMR" id="P29944"/>
<dbReference type="CDD" id="cd06257">
    <property type="entry name" value="DnaJ"/>
    <property type="match status" value="1"/>
</dbReference>
<dbReference type="Gene3D" id="1.10.287.110">
    <property type="entry name" value="DnaJ domain"/>
    <property type="match status" value="1"/>
</dbReference>
<dbReference type="InterPro" id="IPR050817">
    <property type="entry name" value="DjlA_DnaK_co-chaperone"/>
</dbReference>
<dbReference type="InterPro" id="IPR001623">
    <property type="entry name" value="DnaJ_domain"/>
</dbReference>
<dbReference type="InterPro" id="IPR036869">
    <property type="entry name" value="J_dom_sf"/>
</dbReference>
<dbReference type="PANTHER" id="PTHR24074">
    <property type="entry name" value="CO-CHAPERONE PROTEIN DJLA"/>
    <property type="match status" value="1"/>
</dbReference>
<dbReference type="Pfam" id="PF00226">
    <property type="entry name" value="DnaJ"/>
    <property type="match status" value="1"/>
</dbReference>
<dbReference type="PRINTS" id="PR00625">
    <property type="entry name" value="JDOMAIN"/>
</dbReference>
<dbReference type="SMART" id="SM00271">
    <property type="entry name" value="DnaJ"/>
    <property type="match status" value="1"/>
</dbReference>
<dbReference type="SUPFAM" id="SSF46565">
    <property type="entry name" value="Chaperone J-domain"/>
    <property type="match status" value="1"/>
</dbReference>
<dbReference type="PROSITE" id="PS50076">
    <property type="entry name" value="DNAJ_2"/>
    <property type="match status" value="1"/>
</dbReference>
<name>YCB2_SINSX</name>
<protein>
    <recommendedName>
        <fullName>Uncharacterized 19.0 kDa protein in cobS 5'region</fullName>
    </recommendedName>
    <alternativeName>
        <fullName>ORF2</fullName>
    </alternativeName>
</protein>
<reference key="1">
    <citation type="journal article" date="1991" name="J. Bacteriol.">
        <title>Genetic and sequence analyses of a Pseudomonas denitrificans DNA fragment containing two cob genes.</title>
        <authorList>
            <person name="Cameron B."/>
            <person name="Guilhot C."/>
            <person name="Blanche F."/>
            <person name="Cauchois L."/>
            <person name="Rouyez M.-C."/>
            <person name="Rigault S."/>
            <person name="Levy-Schil S."/>
            <person name="Crouzet J."/>
        </authorList>
    </citation>
    <scope>NUCLEOTIDE SEQUENCE [GENOMIC DNA]</scope>
    <source>
        <strain>SC510</strain>
    </source>
</reference>
<sequence length="171" mass="18973">MHRAPVGRNAEGQYFMFCFEHVKEYNKGYNFFSGLSDSEVARYQKEAITGHRPTWTVGVNKNAKNGPTQSQTRSGSAGAQARMRDPFGFVSEARARSGRPEPRQRKLKTLEAKAFETLGLGASATTADIKAAYKDLVKKHHPDANGGDRGSEERFRAVIQAYQLLKQAGFC</sequence>
<evidence type="ECO:0000255" key="1">
    <source>
        <dbReference type="PROSITE-ProRule" id="PRU00286"/>
    </source>
</evidence>
<evidence type="ECO:0000256" key="2">
    <source>
        <dbReference type="SAM" id="MobiDB-lite"/>
    </source>
</evidence>
<evidence type="ECO:0000305" key="3"/>
<organism>
    <name type="scientific">Sinorhizobium sp</name>
    <dbReference type="NCBI Taxonomy" id="42445"/>
    <lineage>
        <taxon>Bacteria</taxon>
        <taxon>Pseudomonadati</taxon>
        <taxon>Pseudomonadota</taxon>
        <taxon>Alphaproteobacteria</taxon>
        <taxon>Hyphomicrobiales</taxon>
        <taxon>Rhizobiaceae</taxon>
        <taxon>Sinorhizobium/Ensifer group</taxon>
        <taxon>Sinorhizobium</taxon>
    </lineage>
</organism>
<proteinExistence type="predicted"/>
<accession>P29944</accession>
<comment type="caution">
    <text evidence="3">Was originally thought to originate from Pseudomonas denitrificans, but similarity searches show that the sequence is much closer to Sinorhizobium. The entry's taxonomy has been changed.</text>
</comment>